<dbReference type="EC" id="2.1.1.33" evidence="2"/>
<dbReference type="EMBL" id="CP001600">
    <property type="protein sequence ID" value="ACR67515.1"/>
    <property type="molecule type" value="Genomic_DNA"/>
</dbReference>
<dbReference type="RefSeq" id="WP_015869724.1">
    <property type="nucleotide sequence ID" value="NZ_CP169062.1"/>
</dbReference>
<dbReference type="SMR" id="C5BCF2"/>
<dbReference type="STRING" id="67780.B6E78_12470"/>
<dbReference type="GeneID" id="69537368"/>
<dbReference type="KEGG" id="eic:NT01EI_0273"/>
<dbReference type="PATRIC" id="fig|634503.3.peg.245"/>
<dbReference type="HOGENOM" id="CLU_050910_0_1_6"/>
<dbReference type="OrthoDB" id="9802090at2"/>
<dbReference type="UniPathway" id="UPA00989"/>
<dbReference type="Proteomes" id="UP000001485">
    <property type="component" value="Chromosome"/>
</dbReference>
<dbReference type="GO" id="GO:0043527">
    <property type="term" value="C:tRNA methyltransferase complex"/>
    <property type="evidence" value="ECO:0007669"/>
    <property type="project" value="TreeGrafter"/>
</dbReference>
<dbReference type="GO" id="GO:0008176">
    <property type="term" value="F:tRNA (guanine(46)-N7)-methyltransferase activity"/>
    <property type="evidence" value="ECO:0007669"/>
    <property type="project" value="UniProtKB-UniRule"/>
</dbReference>
<dbReference type="CDD" id="cd02440">
    <property type="entry name" value="AdoMet_MTases"/>
    <property type="match status" value="1"/>
</dbReference>
<dbReference type="FunFam" id="3.40.50.150:FF:000024">
    <property type="entry name" value="tRNA (guanine-N(7)-)-methyltransferase"/>
    <property type="match status" value="1"/>
</dbReference>
<dbReference type="Gene3D" id="3.40.50.150">
    <property type="entry name" value="Vaccinia Virus protein VP39"/>
    <property type="match status" value="1"/>
</dbReference>
<dbReference type="HAMAP" id="MF_01057">
    <property type="entry name" value="tRNA_methyltr_TrmB"/>
    <property type="match status" value="1"/>
</dbReference>
<dbReference type="InterPro" id="IPR029063">
    <property type="entry name" value="SAM-dependent_MTases_sf"/>
</dbReference>
<dbReference type="InterPro" id="IPR003358">
    <property type="entry name" value="tRNA_(Gua-N-7)_MeTrfase_Trmb"/>
</dbReference>
<dbReference type="InterPro" id="IPR055361">
    <property type="entry name" value="tRNA_methyltr_TrmB_bact"/>
</dbReference>
<dbReference type="NCBIfam" id="TIGR00091">
    <property type="entry name" value="tRNA (guanosine(46)-N7)-methyltransferase TrmB"/>
    <property type="match status" value="1"/>
</dbReference>
<dbReference type="PANTHER" id="PTHR23417">
    <property type="entry name" value="3-DEOXY-D-MANNO-OCTULOSONIC-ACID TRANSFERASE/TRNA GUANINE-N 7 - -METHYLTRANSFERASE"/>
    <property type="match status" value="1"/>
</dbReference>
<dbReference type="PANTHER" id="PTHR23417:SF14">
    <property type="entry name" value="PENTACOTRIPEPTIDE-REPEAT REGION OF PRORP DOMAIN-CONTAINING PROTEIN"/>
    <property type="match status" value="1"/>
</dbReference>
<dbReference type="Pfam" id="PF02390">
    <property type="entry name" value="Methyltransf_4"/>
    <property type="match status" value="1"/>
</dbReference>
<dbReference type="SUPFAM" id="SSF53335">
    <property type="entry name" value="S-adenosyl-L-methionine-dependent methyltransferases"/>
    <property type="match status" value="1"/>
</dbReference>
<dbReference type="PROSITE" id="PS51625">
    <property type="entry name" value="SAM_MT_TRMB"/>
    <property type="match status" value="1"/>
</dbReference>
<accession>C5BCF2</accession>
<evidence type="ECO:0000250" key="1"/>
<evidence type="ECO:0000255" key="2">
    <source>
        <dbReference type="HAMAP-Rule" id="MF_01057"/>
    </source>
</evidence>
<feature type="chain" id="PRO_1000213439" description="tRNA (guanine-N(7)-)-methyltransferase">
    <location>
        <begin position="1"/>
        <end position="238"/>
    </location>
</feature>
<feature type="active site" evidence="1">
    <location>
        <position position="143"/>
    </location>
</feature>
<feature type="binding site" evidence="2">
    <location>
        <position position="68"/>
    </location>
    <ligand>
        <name>S-adenosyl-L-methionine</name>
        <dbReference type="ChEBI" id="CHEBI:59789"/>
    </ligand>
</feature>
<feature type="binding site" evidence="2">
    <location>
        <position position="93"/>
    </location>
    <ligand>
        <name>S-adenosyl-L-methionine</name>
        <dbReference type="ChEBI" id="CHEBI:59789"/>
    </ligand>
</feature>
<feature type="binding site" evidence="2">
    <location>
        <position position="120"/>
    </location>
    <ligand>
        <name>S-adenosyl-L-methionine</name>
        <dbReference type="ChEBI" id="CHEBI:59789"/>
    </ligand>
</feature>
<feature type="binding site" evidence="2">
    <location>
        <position position="143"/>
    </location>
    <ligand>
        <name>S-adenosyl-L-methionine</name>
        <dbReference type="ChEBI" id="CHEBI:59789"/>
    </ligand>
</feature>
<feature type="binding site" evidence="2">
    <location>
        <position position="147"/>
    </location>
    <ligand>
        <name>substrate</name>
    </ligand>
</feature>
<feature type="binding site" evidence="2">
    <location>
        <position position="179"/>
    </location>
    <ligand>
        <name>substrate</name>
    </ligand>
</feature>
<feature type="binding site" evidence="2">
    <location>
        <begin position="216"/>
        <end position="219"/>
    </location>
    <ligand>
        <name>substrate</name>
    </ligand>
</feature>
<proteinExistence type="inferred from homology"/>
<gene>
    <name evidence="2" type="primary">trmB</name>
    <name type="ordered locus">NT01EI_0273</name>
</gene>
<protein>
    <recommendedName>
        <fullName evidence="2">tRNA (guanine-N(7)-)-methyltransferase</fullName>
        <ecNumber evidence="2">2.1.1.33</ecNumber>
    </recommendedName>
    <alternativeName>
        <fullName evidence="2">tRNA (guanine(46)-N(7))-methyltransferase</fullName>
    </alternativeName>
    <alternativeName>
        <fullName evidence="2">tRNA(m7G46)-methyltransferase</fullName>
    </alternativeName>
</protein>
<reference key="1">
    <citation type="submission" date="2009-03" db="EMBL/GenBank/DDBJ databases">
        <title>Complete genome sequence of Edwardsiella ictaluri 93-146.</title>
        <authorList>
            <person name="Williams M.L."/>
            <person name="Gillaspy A.F."/>
            <person name="Dyer D.W."/>
            <person name="Thune R.L."/>
            <person name="Waldbieser G.C."/>
            <person name="Schuster S.C."/>
            <person name="Gipson J."/>
            <person name="Zaitshik J."/>
            <person name="Landry C."/>
            <person name="Lawrence M.L."/>
        </authorList>
    </citation>
    <scope>NUCLEOTIDE SEQUENCE [LARGE SCALE GENOMIC DNA]</scope>
    <source>
        <strain>93-146</strain>
    </source>
</reference>
<name>TRMB_EDWI9</name>
<comment type="function">
    <text evidence="2">Catalyzes the formation of N(7)-methylguanine at position 46 (m7G46) in tRNA.</text>
</comment>
<comment type="catalytic activity">
    <reaction evidence="2">
        <text>guanosine(46) in tRNA + S-adenosyl-L-methionine = N(7)-methylguanosine(46) in tRNA + S-adenosyl-L-homocysteine</text>
        <dbReference type="Rhea" id="RHEA:42708"/>
        <dbReference type="Rhea" id="RHEA-COMP:10188"/>
        <dbReference type="Rhea" id="RHEA-COMP:10189"/>
        <dbReference type="ChEBI" id="CHEBI:57856"/>
        <dbReference type="ChEBI" id="CHEBI:59789"/>
        <dbReference type="ChEBI" id="CHEBI:74269"/>
        <dbReference type="ChEBI" id="CHEBI:74480"/>
        <dbReference type="EC" id="2.1.1.33"/>
    </reaction>
</comment>
<comment type="pathway">
    <text evidence="2">tRNA modification; N(7)-methylguanine-tRNA biosynthesis.</text>
</comment>
<comment type="subunit">
    <text evidence="2">Monomer.</text>
</comment>
<comment type="similarity">
    <text evidence="2">Belongs to the class I-like SAM-binding methyltransferase superfamily. TrmB family.</text>
</comment>
<sequence>MNDVITAEFDENGRAIRRIRSFVRRQGRLTKGQQLALDEYWPLMGVEFTPEALDLPTLFGREAPVVLEIGFGMGASLVAMAQQHPERDFLGIEVHSPGVGACLSSAHEAGVNNLRVMCHDAVEVLERMIPDASLDMVQLFFPDPWHKARHHKRRIVQSAFAGRIRGKLKISGVFHMATDWENYAEHMLEVMNHAPGYRNLSDDNTYVPRPDSRPVTKFELRGQRLGHGNWDLMFERVE</sequence>
<organism>
    <name type="scientific">Edwardsiella ictaluri (strain 93-146)</name>
    <dbReference type="NCBI Taxonomy" id="634503"/>
    <lineage>
        <taxon>Bacteria</taxon>
        <taxon>Pseudomonadati</taxon>
        <taxon>Pseudomonadota</taxon>
        <taxon>Gammaproteobacteria</taxon>
        <taxon>Enterobacterales</taxon>
        <taxon>Hafniaceae</taxon>
        <taxon>Edwardsiella</taxon>
    </lineage>
</organism>
<keyword id="KW-0489">Methyltransferase</keyword>
<keyword id="KW-0949">S-adenosyl-L-methionine</keyword>
<keyword id="KW-0808">Transferase</keyword>
<keyword id="KW-0819">tRNA processing</keyword>